<feature type="chain" id="PRO_0000102871" description="Succinate--CoA ligase [GDP-forming] subunit beta">
    <location>
        <begin position="1"/>
        <end position="378"/>
    </location>
</feature>
<feature type="domain" description="ATP-grasp" evidence="1">
    <location>
        <begin position="9"/>
        <end position="235"/>
    </location>
</feature>
<feature type="binding site" evidence="2">
    <location>
        <position position="45"/>
    </location>
    <ligand>
        <name>GTP</name>
        <dbReference type="ChEBI" id="CHEBI:37565"/>
    </ligand>
</feature>
<feature type="binding site" evidence="2">
    <location>
        <begin position="52"/>
        <end position="54"/>
    </location>
    <ligand>
        <name>GTP</name>
        <dbReference type="ChEBI" id="CHEBI:37565"/>
    </ligand>
</feature>
<feature type="binding site" evidence="2">
    <location>
        <position position="94"/>
    </location>
    <ligand>
        <name>GTP</name>
        <dbReference type="ChEBI" id="CHEBI:37565"/>
    </ligand>
</feature>
<feature type="binding site" evidence="2">
    <location>
        <position position="99"/>
    </location>
    <ligand>
        <name>GTP</name>
        <dbReference type="ChEBI" id="CHEBI:37565"/>
    </ligand>
</feature>
<feature type="binding site" evidence="1 2">
    <location>
        <position position="190"/>
    </location>
    <ligand>
        <name>Mg(2+)</name>
        <dbReference type="ChEBI" id="CHEBI:18420"/>
    </ligand>
</feature>
<feature type="binding site" evidence="1 2">
    <location>
        <position position="204"/>
    </location>
    <ligand>
        <name>Mg(2+)</name>
        <dbReference type="ChEBI" id="CHEBI:18420"/>
    </ligand>
</feature>
<feature type="binding site" evidence="1">
    <location>
        <position position="255"/>
    </location>
    <ligand>
        <name>substrate</name>
        <note>ligand shared with subunit alpha</note>
    </ligand>
</feature>
<feature type="binding site" evidence="1">
    <location>
        <begin position="312"/>
        <end position="314"/>
    </location>
    <ligand>
        <name>substrate</name>
        <note>ligand shared with subunit alpha</note>
    </ligand>
</feature>
<feature type="sequence conflict" description="In Ref. 2; CAA39506." evidence="3" ref="2">
    <original>V</original>
    <variation>I</variation>
    <location>
        <position position="357"/>
    </location>
</feature>
<feature type="helix" evidence="5">
    <location>
        <begin position="5"/>
        <end position="14"/>
    </location>
</feature>
<feature type="strand" evidence="5">
    <location>
        <begin position="22"/>
        <end position="27"/>
    </location>
</feature>
<feature type="helix" evidence="5">
    <location>
        <begin position="28"/>
        <end position="38"/>
    </location>
</feature>
<feature type="strand" evidence="5">
    <location>
        <begin position="42"/>
        <end position="46"/>
    </location>
</feature>
<feature type="strand" evidence="5">
    <location>
        <begin position="49"/>
        <end position="51"/>
    </location>
</feature>
<feature type="turn" evidence="5">
    <location>
        <begin position="53"/>
        <end position="57"/>
    </location>
</feature>
<feature type="strand" evidence="5">
    <location>
        <begin position="59"/>
        <end position="64"/>
    </location>
</feature>
<feature type="helix" evidence="5">
    <location>
        <begin position="65"/>
        <end position="75"/>
    </location>
</feature>
<feature type="strand" evidence="5">
    <location>
        <begin position="88"/>
        <end position="92"/>
    </location>
</feature>
<feature type="strand" evidence="5">
    <location>
        <begin position="96"/>
        <end position="107"/>
    </location>
</feature>
<feature type="turn" evidence="5">
    <location>
        <begin position="108"/>
        <end position="111"/>
    </location>
</feature>
<feature type="strand" evidence="5">
    <location>
        <begin position="112"/>
        <end position="119"/>
    </location>
</feature>
<feature type="helix" evidence="5">
    <location>
        <begin position="125"/>
        <end position="131"/>
    </location>
</feature>
<feature type="helix" evidence="5">
    <location>
        <begin position="133"/>
        <end position="135"/>
    </location>
</feature>
<feature type="strand" evidence="5">
    <location>
        <begin position="137"/>
        <end position="140"/>
    </location>
</feature>
<feature type="turn" evidence="5">
    <location>
        <begin position="143"/>
        <end position="145"/>
    </location>
</feature>
<feature type="helix" evidence="5">
    <location>
        <begin position="149"/>
        <end position="159"/>
    </location>
</feature>
<feature type="helix" evidence="5">
    <location>
        <begin position="165"/>
        <end position="181"/>
    </location>
</feature>
<feature type="strand" evidence="5">
    <location>
        <begin position="184"/>
        <end position="195"/>
    </location>
</feature>
<feature type="strand" evidence="5">
    <location>
        <begin position="200"/>
        <end position="204"/>
    </location>
</feature>
<feature type="strand" evidence="5">
    <location>
        <begin position="206"/>
        <end position="209"/>
    </location>
</feature>
<feature type="helix" evidence="5">
    <location>
        <begin position="211"/>
        <end position="216"/>
    </location>
</feature>
<feature type="helix" evidence="5">
    <location>
        <begin position="218"/>
        <end position="221"/>
    </location>
</feature>
<feature type="helix" evidence="5">
    <location>
        <begin position="224"/>
        <end position="227"/>
    </location>
</feature>
<feature type="helix" evidence="5">
    <location>
        <begin position="231"/>
        <end position="238"/>
    </location>
</feature>
<feature type="strand" evidence="5">
    <location>
        <begin position="242"/>
        <end position="245"/>
    </location>
</feature>
<feature type="strand" evidence="5">
    <location>
        <begin position="247"/>
        <end position="256"/>
    </location>
</feature>
<feature type="helix" evidence="5">
    <location>
        <begin position="257"/>
        <end position="269"/>
    </location>
</feature>
<feature type="strand" evidence="5">
    <location>
        <begin position="274"/>
        <end position="279"/>
    </location>
</feature>
<feature type="helix" evidence="5">
    <location>
        <begin position="286"/>
        <end position="297"/>
    </location>
</feature>
<feature type="strand" evidence="5">
    <location>
        <begin position="304"/>
        <end position="316"/>
    </location>
</feature>
<feature type="helix" evidence="5">
    <location>
        <begin position="317"/>
        <end position="327"/>
    </location>
</feature>
<feature type="turn" evidence="5">
    <location>
        <begin position="328"/>
        <end position="330"/>
    </location>
</feature>
<feature type="strand" evidence="5">
    <location>
        <begin position="336"/>
        <end position="343"/>
    </location>
</feature>
<feature type="helix" evidence="5">
    <location>
        <begin position="345"/>
        <end position="351"/>
    </location>
</feature>
<feature type="turn" evidence="5">
    <location>
        <begin position="352"/>
        <end position="354"/>
    </location>
</feature>
<feature type="strand" evidence="5">
    <location>
        <begin position="355"/>
        <end position="359"/>
    </location>
</feature>
<feature type="helix" evidence="5">
    <location>
        <begin position="363"/>
        <end position="372"/>
    </location>
</feature>
<accession>P25126</accession>
<sequence length="378" mass="40603">MNLHEYQAKEILARYGVPVPPGKVAYTPEEAKRIAEEFGKRVVIKAQVHVGGRGKAGGVKLADTPQEAYEKAQAILGMNIKGLTVKKVLVAEAVDIAKEYYAGLILDRAKKRVVLMLSKEGGVDIEEVAAERPEAIHKFWIDPHKGFRPFEAREMVKRAGLEGNLNKLAQVLVALYRAYEGVDASIAEINPLVVTTDGGIVAADAKIVLDDNALFRHPDLAELREVEAEHPLEVEASNYGFAYVKLDGNIGIIGNGAGLVMYTLDLVNRVGGKPANFLDIGGGAKADVVYNALKVVLKDPDVKGVFINIFGGITRADEVAKGVIRALEEGLLTKPVVMRVAGTAEEEAKKLLEGKPVYMYPTSIEAAKAIVAMVGGAA</sequence>
<keyword id="KW-0002">3D-structure</keyword>
<keyword id="KW-0342">GTP-binding</keyword>
<keyword id="KW-0436">Ligase</keyword>
<keyword id="KW-0460">Magnesium</keyword>
<keyword id="KW-0479">Metal-binding</keyword>
<keyword id="KW-0547">Nucleotide-binding</keyword>
<keyword id="KW-0816">Tricarboxylic acid cycle</keyword>
<evidence type="ECO:0000255" key="1">
    <source>
        <dbReference type="HAMAP-Rule" id="MF_00558"/>
    </source>
</evidence>
<evidence type="ECO:0000269" key="2">
    <source>
    </source>
</evidence>
<evidence type="ECO:0000305" key="3"/>
<evidence type="ECO:0000305" key="4">
    <source>
    </source>
</evidence>
<evidence type="ECO:0007829" key="5">
    <source>
        <dbReference type="PDB" id="3UFX"/>
    </source>
</evidence>
<dbReference type="EC" id="6.2.1.4" evidence="2"/>
<dbReference type="EMBL" id="X54073">
    <property type="protein sequence ID" value="CAA38006.1"/>
    <property type="molecule type" value="Genomic_DNA"/>
</dbReference>
<dbReference type="EMBL" id="X56033">
    <property type="protein sequence ID" value="CAA39506.1"/>
    <property type="molecule type" value="Genomic_DNA"/>
</dbReference>
<dbReference type="PDB" id="3UFX">
    <property type="method" value="X-ray"/>
    <property type="resolution" value="2.35 A"/>
    <property type="chains" value="B/E/G/I=1-378"/>
</dbReference>
<dbReference type="PDBsum" id="3UFX"/>
<dbReference type="SMR" id="P25126"/>
<dbReference type="UniPathway" id="UPA00223">
    <property type="reaction ID" value="UER00999"/>
</dbReference>
<dbReference type="EvolutionaryTrace" id="P25126"/>
<dbReference type="GO" id="GO:0005829">
    <property type="term" value="C:cytosol"/>
    <property type="evidence" value="ECO:0007669"/>
    <property type="project" value="TreeGrafter"/>
</dbReference>
<dbReference type="GO" id="GO:0042709">
    <property type="term" value="C:succinate-CoA ligase complex"/>
    <property type="evidence" value="ECO:0007669"/>
    <property type="project" value="TreeGrafter"/>
</dbReference>
<dbReference type="GO" id="GO:0005524">
    <property type="term" value="F:ATP binding"/>
    <property type="evidence" value="ECO:0007669"/>
    <property type="project" value="UniProtKB-UniRule"/>
</dbReference>
<dbReference type="GO" id="GO:0005525">
    <property type="term" value="F:GTP binding"/>
    <property type="evidence" value="ECO:0007669"/>
    <property type="project" value="UniProtKB-KW"/>
</dbReference>
<dbReference type="GO" id="GO:0000287">
    <property type="term" value="F:magnesium ion binding"/>
    <property type="evidence" value="ECO:0007669"/>
    <property type="project" value="UniProtKB-UniRule"/>
</dbReference>
<dbReference type="GO" id="GO:0004775">
    <property type="term" value="F:succinate-CoA ligase (ADP-forming) activity"/>
    <property type="evidence" value="ECO:0007669"/>
    <property type="project" value="UniProtKB-UniRule"/>
</dbReference>
<dbReference type="GO" id="GO:0004776">
    <property type="term" value="F:succinate-CoA ligase (GDP-forming) activity"/>
    <property type="evidence" value="ECO:0007669"/>
    <property type="project" value="UniProtKB-EC"/>
</dbReference>
<dbReference type="GO" id="GO:0006104">
    <property type="term" value="P:succinyl-CoA metabolic process"/>
    <property type="evidence" value="ECO:0007669"/>
    <property type="project" value="TreeGrafter"/>
</dbReference>
<dbReference type="GO" id="GO:0006099">
    <property type="term" value="P:tricarboxylic acid cycle"/>
    <property type="evidence" value="ECO:0007669"/>
    <property type="project" value="UniProtKB-UniRule"/>
</dbReference>
<dbReference type="FunFam" id="3.30.1490.20:FF:000014">
    <property type="entry name" value="Succinate--CoA ligase [ADP-forming] subunit beta"/>
    <property type="match status" value="1"/>
</dbReference>
<dbReference type="FunFam" id="3.30.470.20:FF:000002">
    <property type="entry name" value="Succinate--CoA ligase [ADP-forming] subunit beta"/>
    <property type="match status" value="1"/>
</dbReference>
<dbReference type="FunFam" id="3.40.50.261:FF:000001">
    <property type="entry name" value="Succinate--CoA ligase [ADP-forming] subunit beta"/>
    <property type="match status" value="1"/>
</dbReference>
<dbReference type="Gene3D" id="3.30.1490.20">
    <property type="entry name" value="ATP-grasp fold, A domain"/>
    <property type="match status" value="1"/>
</dbReference>
<dbReference type="Gene3D" id="3.30.470.20">
    <property type="entry name" value="ATP-grasp fold, B domain"/>
    <property type="match status" value="1"/>
</dbReference>
<dbReference type="Gene3D" id="3.40.50.261">
    <property type="entry name" value="Succinyl-CoA synthetase domains"/>
    <property type="match status" value="1"/>
</dbReference>
<dbReference type="HAMAP" id="MF_00558">
    <property type="entry name" value="Succ_CoA_beta"/>
    <property type="match status" value="1"/>
</dbReference>
<dbReference type="InterPro" id="IPR011761">
    <property type="entry name" value="ATP-grasp"/>
</dbReference>
<dbReference type="InterPro" id="IPR013650">
    <property type="entry name" value="ATP-grasp_succ-CoA_synth-type"/>
</dbReference>
<dbReference type="InterPro" id="IPR013815">
    <property type="entry name" value="ATP_grasp_subdomain_1"/>
</dbReference>
<dbReference type="InterPro" id="IPR017866">
    <property type="entry name" value="Succ-CoA_synthase_bsu_CS"/>
</dbReference>
<dbReference type="InterPro" id="IPR005811">
    <property type="entry name" value="SUCC_ACL_C"/>
</dbReference>
<dbReference type="InterPro" id="IPR005809">
    <property type="entry name" value="Succ_CoA_ligase-like_bsu"/>
</dbReference>
<dbReference type="InterPro" id="IPR016102">
    <property type="entry name" value="Succinyl-CoA_synth-like"/>
</dbReference>
<dbReference type="NCBIfam" id="NF001913">
    <property type="entry name" value="PRK00696.1"/>
    <property type="match status" value="1"/>
</dbReference>
<dbReference type="NCBIfam" id="TIGR01016">
    <property type="entry name" value="sucCoAbeta"/>
    <property type="match status" value="1"/>
</dbReference>
<dbReference type="PANTHER" id="PTHR11815:SF10">
    <property type="entry name" value="SUCCINATE--COA LIGASE [GDP-FORMING] SUBUNIT BETA, MITOCHONDRIAL"/>
    <property type="match status" value="1"/>
</dbReference>
<dbReference type="PANTHER" id="PTHR11815">
    <property type="entry name" value="SUCCINYL-COA SYNTHETASE BETA CHAIN"/>
    <property type="match status" value="1"/>
</dbReference>
<dbReference type="Pfam" id="PF08442">
    <property type="entry name" value="ATP-grasp_2"/>
    <property type="match status" value="1"/>
</dbReference>
<dbReference type="Pfam" id="PF00549">
    <property type="entry name" value="Ligase_CoA"/>
    <property type="match status" value="1"/>
</dbReference>
<dbReference type="PIRSF" id="PIRSF001554">
    <property type="entry name" value="SucCS_beta"/>
    <property type="match status" value="1"/>
</dbReference>
<dbReference type="SUPFAM" id="SSF56059">
    <property type="entry name" value="Glutathione synthetase ATP-binding domain-like"/>
    <property type="match status" value="1"/>
</dbReference>
<dbReference type="SUPFAM" id="SSF52210">
    <property type="entry name" value="Succinyl-CoA synthetase domains"/>
    <property type="match status" value="1"/>
</dbReference>
<dbReference type="PROSITE" id="PS50975">
    <property type="entry name" value="ATP_GRASP"/>
    <property type="match status" value="1"/>
</dbReference>
<dbReference type="PROSITE" id="PS01217">
    <property type="entry name" value="SUCCINYL_COA_LIG_3"/>
    <property type="match status" value="1"/>
</dbReference>
<comment type="function">
    <text evidence="1 2">Succinyl-CoA synthetase functions in the citric acid cycle (TCA), coupling the hydrolysis of succinyl-CoA to the synthesis of either ATP or GTP and thus represents the only step of substrate-level phosphorylation in the TCA. The beta subunit provides nucleotide specificity of the enzyme and binds the substrate succinate, while the binding sites for coenzyme A and phosphate are found in the alpha subunit (By similarity). Can use either ATP or GTP, but prefers GTP (PubMed:22751660).</text>
</comment>
<comment type="catalytic activity">
    <reaction evidence="2">
        <text>GTP + succinate + CoA = succinyl-CoA + GDP + phosphate</text>
        <dbReference type="Rhea" id="RHEA:22120"/>
        <dbReference type="ChEBI" id="CHEBI:30031"/>
        <dbReference type="ChEBI" id="CHEBI:37565"/>
        <dbReference type="ChEBI" id="CHEBI:43474"/>
        <dbReference type="ChEBI" id="CHEBI:57287"/>
        <dbReference type="ChEBI" id="CHEBI:57292"/>
        <dbReference type="ChEBI" id="CHEBI:58189"/>
        <dbReference type="EC" id="6.2.1.4"/>
    </reaction>
    <physiologicalReaction direction="right-to-left" evidence="2">
        <dbReference type="Rhea" id="RHEA:22122"/>
    </physiologicalReaction>
</comment>
<comment type="catalytic activity">
    <reaction evidence="2">
        <text>succinate + ATP + CoA = succinyl-CoA + ADP + phosphate</text>
        <dbReference type="Rhea" id="RHEA:17661"/>
        <dbReference type="ChEBI" id="CHEBI:30031"/>
        <dbReference type="ChEBI" id="CHEBI:30616"/>
        <dbReference type="ChEBI" id="CHEBI:43474"/>
        <dbReference type="ChEBI" id="CHEBI:57287"/>
        <dbReference type="ChEBI" id="CHEBI:57292"/>
        <dbReference type="ChEBI" id="CHEBI:456216"/>
    </reaction>
    <physiologicalReaction direction="right-to-left" evidence="2">
        <dbReference type="Rhea" id="RHEA:17663"/>
    </physiologicalReaction>
</comment>
<comment type="cofactor">
    <cofactor evidence="1 2">
        <name>Mg(2+)</name>
        <dbReference type="ChEBI" id="CHEBI:18420"/>
    </cofactor>
    <text evidence="1 2">Binds 1 Mg(2+) ion per subunit.</text>
</comment>
<comment type="biophysicochemical properties">
    <kinetics>
        <KM evidence="2">121 uM for ATP</KM>
        <KM evidence="2">24 uM for GTP</KM>
        <KM evidence="2">1.4 mM for succinate</KM>
        <KM evidence="2">5.5 uM for CoA</KM>
    </kinetics>
    <phDependence>
        <text evidence="2">Optimum pH is 8.0-8.4.</text>
    </phDependence>
</comment>
<comment type="pathway">
    <text evidence="1 4">Carbohydrate metabolism; tricarboxylic acid cycle; succinate from succinyl-CoA (ligase route): step 1/1.</text>
</comment>
<comment type="subunit">
    <text evidence="1 2">Heterotetramer of two alpha and two beta subunits.</text>
</comment>
<comment type="similarity">
    <text evidence="1">Belongs to the succinate/malate CoA ligase beta subunit family.</text>
</comment>
<name>SUCC_THETH</name>
<proteinExistence type="evidence at protein level"/>
<organism>
    <name type="scientific">Thermus thermophilus</name>
    <dbReference type="NCBI Taxonomy" id="274"/>
    <lineage>
        <taxon>Bacteria</taxon>
        <taxon>Thermotogati</taxon>
        <taxon>Deinococcota</taxon>
        <taxon>Deinococci</taxon>
        <taxon>Thermales</taxon>
        <taxon>Thermaceae</taxon>
        <taxon>Thermus</taxon>
    </lineage>
</organism>
<protein>
    <recommendedName>
        <fullName evidence="4">Succinate--CoA ligase [GDP-forming] subunit beta</fullName>
        <ecNumber evidence="2">6.2.1.4</ecNumber>
    </recommendedName>
    <alternativeName>
        <fullName evidence="1">Succinyl-CoA synthetase subunit beta</fullName>
        <shortName evidence="1">SCS-beta</shortName>
    </alternativeName>
</protein>
<gene>
    <name evidence="1" type="primary">sucC</name>
    <name type="synonym">scsB</name>
</gene>
<reference key="1">
    <citation type="journal article" date="1991" name="Mol. Gen. Genet.">
        <title>Characterization of an operon encoding succinyl-CoA synthetase and malate dehydrogenase from Thermus flavus AT-62 and its expression in Escherichia coli.</title>
        <authorList>
            <person name="Nishiyama M."/>
            <person name="Horinouchi S."/>
            <person name="Beppu T."/>
        </authorList>
    </citation>
    <scope>NUCLEOTIDE SEQUENCE [GENOMIC DNA]</scope>
    <source>
        <strain>ATCC 33923 / DSM 674 / AT-62</strain>
    </source>
</reference>
<reference key="2">
    <citation type="journal article" date="1990" name="FEMS Microbiol. Lett.">
        <title>Cloning and nucleotide sequences of the mdh and sucD genes from Thermus aquaticus B.</title>
        <authorList>
            <person name="Nicholls D.J."/>
            <person name="Sundaram T.K."/>
            <person name="Atkinson T."/>
            <person name="Minton N.P."/>
        </authorList>
    </citation>
    <scope>NUCLEOTIDE SEQUENCE [GENOMIC DNA] OF 350-378</scope>
    <source>
        <strain>B / NCIMB 11247</strain>
    </source>
</reference>
<reference key="3">
    <citation type="journal article" date="2012" name="Acta Crystallogr. D">
        <title>Biochemical and structural characterization of the GTP-preferring succinyl-CoA synthetase from Thermus aquaticus.</title>
        <authorList>
            <person name="Joyce M.A."/>
            <person name="Hayakawa K."/>
            <person name="Wolodko W.T."/>
            <person name="Fraser M.E."/>
        </authorList>
    </citation>
    <scope>X-RAY CRYSTALLOGRAPHY (2.35 ANGSTROMS) IN COMPLEX WITH GDP AND MANGANESE</scope>
    <scope>CATALYTIC ACTIVITY</scope>
    <scope>BIOPHYSICOCHEMICAL PROPERTIES</scope>
    <scope>SUBUNIT</scope>
</reference>